<name>PYRR_LIMRJ</name>
<comment type="function">
    <text evidence="1">Regulates transcriptional attenuation of the pyrimidine nucleotide (pyr) operon by binding in a uridine-dependent manner to specific sites on pyr mRNA. This disrupts an antiterminator hairpin in the RNA and favors formation of a downstream transcription terminator, leading to a reduced expression of downstream genes.</text>
</comment>
<comment type="function">
    <text evidence="1">Also displays a weak uracil phosphoribosyltransferase activity which is not physiologically significant.</text>
</comment>
<comment type="catalytic activity">
    <reaction evidence="1">
        <text>UMP + diphosphate = 5-phospho-alpha-D-ribose 1-diphosphate + uracil</text>
        <dbReference type="Rhea" id="RHEA:13017"/>
        <dbReference type="ChEBI" id="CHEBI:17568"/>
        <dbReference type="ChEBI" id="CHEBI:33019"/>
        <dbReference type="ChEBI" id="CHEBI:57865"/>
        <dbReference type="ChEBI" id="CHEBI:58017"/>
        <dbReference type="EC" id="2.4.2.9"/>
    </reaction>
</comment>
<comment type="subunit">
    <text evidence="1">Homodimer and homohexamer; in equilibrium.</text>
</comment>
<comment type="similarity">
    <text evidence="1">Belongs to the purine/pyrimidine phosphoribosyltransferase family. PyrR subfamily.</text>
</comment>
<sequence>MAHEILDGSSMQRALTRITYEIIEQNKGVDNLVFVGIKTRGVYLAKRLAKRLNQLENVEIPVAPLDVSLYRDDRHVPDHTQEPTVKTDQLDIDITNKHVILVDDVLFTGRTVRAALDALMDMGRPTRISLAVLVDRGHRELPIRPDFVGKNIPTAMNETVHVAVEEYDGHEDVTIEHN</sequence>
<gene>
    <name evidence="1" type="primary">pyrR</name>
    <name type="ordered locus">LAR_0068</name>
</gene>
<evidence type="ECO:0000255" key="1">
    <source>
        <dbReference type="HAMAP-Rule" id="MF_01219"/>
    </source>
</evidence>
<accession>B2G552</accession>
<organism>
    <name type="scientific">Limosilactobacillus reuteri subsp. reuteri (strain JCM 1112)</name>
    <name type="common">Lactobacillus reuteri</name>
    <dbReference type="NCBI Taxonomy" id="557433"/>
    <lineage>
        <taxon>Bacteria</taxon>
        <taxon>Bacillati</taxon>
        <taxon>Bacillota</taxon>
        <taxon>Bacilli</taxon>
        <taxon>Lactobacillales</taxon>
        <taxon>Lactobacillaceae</taxon>
        <taxon>Limosilactobacillus</taxon>
    </lineage>
</organism>
<keyword id="KW-0328">Glycosyltransferase</keyword>
<keyword id="KW-0694">RNA-binding</keyword>
<keyword id="KW-0804">Transcription</keyword>
<keyword id="KW-0805">Transcription regulation</keyword>
<keyword id="KW-0806">Transcription termination</keyword>
<keyword id="KW-0808">Transferase</keyword>
<dbReference type="EC" id="2.4.2.9" evidence="1"/>
<dbReference type="EMBL" id="AP007281">
    <property type="protein sequence ID" value="BAG24584.1"/>
    <property type="molecule type" value="Genomic_DNA"/>
</dbReference>
<dbReference type="RefSeq" id="WP_003673063.1">
    <property type="nucleotide sequence ID" value="NC_010609.1"/>
</dbReference>
<dbReference type="SMR" id="B2G552"/>
<dbReference type="KEGG" id="lrf:LAR_0068"/>
<dbReference type="HOGENOM" id="CLU_094234_2_1_9"/>
<dbReference type="GO" id="GO:0003723">
    <property type="term" value="F:RNA binding"/>
    <property type="evidence" value="ECO:0007669"/>
    <property type="project" value="UniProtKB-UniRule"/>
</dbReference>
<dbReference type="GO" id="GO:0004845">
    <property type="term" value="F:uracil phosphoribosyltransferase activity"/>
    <property type="evidence" value="ECO:0007669"/>
    <property type="project" value="UniProtKB-UniRule"/>
</dbReference>
<dbReference type="GO" id="GO:0006353">
    <property type="term" value="P:DNA-templated transcription termination"/>
    <property type="evidence" value="ECO:0007669"/>
    <property type="project" value="UniProtKB-UniRule"/>
</dbReference>
<dbReference type="CDD" id="cd06223">
    <property type="entry name" value="PRTases_typeI"/>
    <property type="match status" value="1"/>
</dbReference>
<dbReference type="FunFam" id="3.40.50.2020:FF:000020">
    <property type="entry name" value="Bifunctional protein PyrR"/>
    <property type="match status" value="1"/>
</dbReference>
<dbReference type="Gene3D" id="3.40.50.2020">
    <property type="match status" value="1"/>
</dbReference>
<dbReference type="HAMAP" id="MF_01219">
    <property type="entry name" value="PyrR"/>
    <property type="match status" value="1"/>
</dbReference>
<dbReference type="InterPro" id="IPR000836">
    <property type="entry name" value="PRibTrfase_dom"/>
</dbReference>
<dbReference type="InterPro" id="IPR029057">
    <property type="entry name" value="PRTase-like"/>
</dbReference>
<dbReference type="InterPro" id="IPR023050">
    <property type="entry name" value="PyrR"/>
</dbReference>
<dbReference type="InterPro" id="IPR050137">
    <property type="entry name" value="PyrR_bifunctional"/>
</dbReference>
<dbReference type="NCBIfam" id="NF003548">
    <property type="entry name" value="PRK05205.1-4"/>
    <property type="match status" value="1"/>
</dbReference>
<dbReference type="NCBIfam" id="NF003549">
    <property type="entry name" value="PRK05205.1-5"/>
    <property type="match status" value="1"/>
</dbReference>
<dbReference type="PANTHER" id="PTHR11608">
    <property type="entry name" value="BIFUNCTIONAL PROTEIN PYRR"/>
    <property type="match status" value="1"/>
</dbReference>
<dbReference type="PANTHER" id="PTHR11608:SF0">
    <property type="entry name" value="BIFUNCTIONAL PROTEIN PYRR"/>
    <property type="match status" value="1"/>
</dbReference>
<dbReference type="Pfam" id="PF00156">
    <property type="entry name" value="Pribosyltran"/>
    <property type="match status" value="1"/>
</dbReference>
<dbReference type="SUPFAM" id="SSF53271">
    <property type="entry name" value="PRTase-like"/>
    <property type="match status" value="1"/>
</dbReference>
<feature type="chain" id="PRO_1000139199" description="Bifunctional protein PyrR">
    <location>
        <begin position="1"/>
        <end position="178"/>
    </location>
</feature>
<feature type="short sequence motif" description="PRPP-binding" evidence="1">
    <location>
        <begin position="99"/>
        <end position="111"/>
    </location>
</feature>
<protein>
    <recommendedName>
        <fullName evidence="1">Bifunctional protein PyrR</fullName>
    </recommendedName>
    <domain>
        <recommendedName>
            <fullName evidence="1">Pyrimidine operon regulatory protein</fullName>
        </recommendedName>
    </domain>
    <domain>
        <recommendedName>
            <fullName evidence="1">Uracil phosphoribosyltransferase</fullName>
            <shortName evidence="1">UPRTase</shortName>
            <ecNumber evidence="1">2.4.2.9</ecNumber>
        </recommendedName>
    </domain>
</protein>
<proteinExistence type="inferred from homology"/>
<reference key="1">
    <citation type="journal article" date="2008" name="DNA Res.">
        <title>Comparative genome analysis of Lactobacillus reuteri and Lactobacillus fermentum reveal a genomic island for reuterin and cobalamin production.</title>
        <authorList>
            <person name="Morita H."/>
            <person name="Toh H."/>
            <person name="Fukuda S."/>
            <person name="Horikawa H."/>
            <person name="Oshima K."/>
            <person name="Suzuki T."/>
            <person name="Murakami M."/>
            <person name="Hisamatsu S."/>
            <person name="Kato Y."/>
            <person name="Takizawa T."/>
            <person name="Fukuoka H."/>
            <person name="Yoshimura T."/>
            <person name="Itoh K."/>
            <person name="O'Sullivan D.J."/>
            <person name="McKay L.L."/>
            <person name="Ohno H."/>
            <person name="Kikuchi J."/>
            <person name="Masaoka T."/>
            <person name="Hattori M."/>
        </authorList>
    </citation>
    <scope>NUCLEOTIDE SEQUENCE [LARGE SCALE GENOMIC DNA]</scope>
    <source>
        <strain>JCM 1112</strain>
    </source>
</reference>